<proteinExistence type="evidence at protein level"/>
<keyword id="KW-1185">Reference proteome</keyword>
<keyword id="KW-0687">Ribonucleoprotein</keyword>
<keyword id="KW-0689">Ribosomal protein</keyword>
<reference key="1">
    <citation type="journal article" date="2001" name="Cell">
        <title>A plant viral 'reinitiation' factor interacts with the host translational machinery.</title>
        <authorList>
            <person name="Park H.S."/>
            <person name="Himmelbach A."/>
            <person name="Browning K.S."/>
            <person name="Hohn T."/>
            <person name="Ryabova L.A."/>
        </authorList>
    </citation>
    <scope>NUCLEOTIDE SEQUENCE [MRNA]</scope>
    <scope>FUNCTION</scope>
    <scope>INTERACTION WITH TAV</scope>
</reference>
<reference key="2">
    <citation type="journal article" date="1999" name="Nature">
        <title>Sequence and analysis of chromosome 2 of the plant Arabidopsis thaliana.</title>
        <authorList>
            <person name="Lin X."/>
            <person name="Kaul S."/>
            <person name="Rounsley S.D."/>
            <person name="Shea T.P."/>
            <person name="Benito M.-I."/>
            <person name="Town C.D."/>
            <person name="Fujii C.Y."/>
            <person name="Mason T.M."/>
            <person name="Bowman C.L."/>
            <person name="Barnstead M.E."/>
            <person name="Feldblyum T.V."/>
            <person name="Buell C.R."/>
            <person name="Ketchum K.A."/>
            <person name="Lee J.J."/>
            <person name="Ronning C.M."/>
            <person name="Koo H.L."/>
            <person name="Moffat K.S."/>
            <person name="Cronin L.A."/>
            <person name="Shen M."/>
            <person name="Pai G."/>
            <person name="Van Aken S."/>
            <person name="Umayam L."/>
            <person name="Tallon L.J."/>
            <person name="Gill J.E."/>
            <person name="Adams M.D."/>
            <person name="Carrera A.J."/>
            <person name="Creasy T.H."/>
            <person name="Goodman H.M."/>
            <person name="Somerville C.R."/>
            <person name="Copenhaver G.P."/>
            <person name="Preuss D."/>
            <person name="Nierman W.C."/>
            <person name="White O."/>
            <person name="Eisen J.A."/>
            <person name="Salzberg S.L."/>
            <person name="Fraser C.M."/>
            <person name="Venter J.C."/>
        </authorList>
    </citation>
    <scope>NUCLEOTIDE SEQUENCE [LARGE SCALE GENOMIC DNA]</scope>
    <source>
        <strain>cv. Columbia</strain>
    </source>
</reference>
<reference key="3">
    <citation type="journal article" date="2017" name="Plant J.">
        <title>Araport11: a complete reannotation of the Arabidopsis thaliana reference genome.</title>
        <authorList>
            <person name="Cheng C.Y."/>
            <person name="Krishnakumar V."/>
            <person name="Chan A.P."/>
            <person name="Thibaud-Nissen F."/>
            <person name="Schobel S."/>
            <person name="Town C.D."/>
        </authorList>
    </citation>
    <scope>GENOME REANNOTATION</scope>
    <source>
        <strain>cv. Columbia</strain>
    </source>
</reference>
<reference key="4">
    <citation type="journal article" date="2003" name="Science">
        <title>Empirical analysis of transcriptional activity in the Arabidopsis genome.</title>
        <authorList>
            <person name="Yamada K."/>
            <person name="Lim J."/>
            <person name="Dale J.M."/>
            <person name="Chen H."/>
            <person name="Shinn P."/>
            <person name="Palm C.J."/>
            <person name="Southwick A.M."/>
            <person name="Wu H.C."/>
            <person name="Kim C.J."/>
            <person name="Nguyen M."/>
            <person name="Pham P.K."/>
            <person name="Cheuk R.F."/>
            <person name="Karlin-Newmann G."/>
            <person name="Liu S.X."/>
            <person name="Lam B."/>
            <person name="Sakano H."/>
            <person name="Wu T."/>
            <person name="Yu G."/>
            <person name="Miranda M."/>
            <person name="Quach H.L."/>
            <person name="Tripp M."/>
            <person name="Chang C.H."/>
            <person name="Lee J.M."/>
            <person name="Toriumi M.J."/>
            <person name="Chan M.M."/>
            <person name="Tang C.C."/>
            <person name="Onodera C.S."/>
            <person name="Deng J.M."/>
            <person name="Akiyama K."/>
            <person name="Ansari Y."/>
            <person name="Arakawa T."/>
            <person name="Banh J."/>
            <person name="Banno F."/>
            <person name="Bowser L."/>
            <person name="Brooks S.Y."/>
            <person name="Carninci P."/>
            <person name="Chao Q."/>
            <person name="Choy N."/>
            <person name="Enju A."/>
            <person name="Goldsmith A.D."/>
            <person name="Gurjal M."/>
            <person name="Hansen N.F."/>
            <person name="Hayashizaki Y."/>
            <person name="Johnson-Hopson C."/>
            <person name="Hsuan V.W."/>
            <person name="Iida K."/>
            <person name="Karnes M."/>
            <person name="Khan S."/>
            <person name="Koesema E."/>
            <person name="Ishida J."/>
            <person name="Jiang P.X."/>
            <person name="Jones T."/>
            <person name="Kawai J."/>
            <person name="Kamiya A."/>
            <person name="Meyers C."/>
            <person name="Nakajima M."/>
            <person name="Narusaka M."/>
            <person name="Seki M."/>
            <person name="Sakurai T."/>
            <person name="Satou M."/>
            <person name="Tamse R."/>
            <person name="Vaysberg M."/>
            <person name="Wallender E.K."/>
            <person name="Wong C."/>
            <person name="Yamamura Y."/>
            <person name="Yuan S."/>
            <person name="Shinozaki K."/>
            <person name="Davis R.W."/>
            <person name="Theologis A."/>
            <person name="Ecker J.R."/>
        </authorList>
    </citation>
    <scope>NUCLEOTIDE SEQUENCE [LARGE SCALE MRNA]</scope>
    <source>
        <strain>cv. Columbia</strain>
    </source>
</reference>
<reference key="5">
    <citation type="submission" date="2002-03" db="EMBL/GenBank/DDBJ databases">
        <title>Full-length cDNA from Arabidopsis thaliana.</title>
        <authorList>
            <person name="Brover V.V."/>
            <person name="Troukhan M.E."/>
            <person name="Alexandrov N.A."/>
            <person name="Lu Y.-P."/>
            <person name="Flavell R.B."/>
            <person name="Feldmann K.A."/>
        </authorList>
    </citation>
    <scope>NUCLEOTIDE SEQUENCE [LARGE SCALE MRNA]</scope>
</reference>
<reference key="6">
    <citation type="journal article" date="1996" name="Plant J.">
        <title>Further progress towards a catalogue of all Arabidopsis genes: analysis of a set of 5000 non-redundant ESTs.</title>
        <authorList>
            <person name="Cooke R."/>
            <person name="Raynal M."/>
            <person name="Laudie M."/>
            <person name="Grellet F."/>
            <person name="Delseny M."/>
            <person name="Morris P.-C."/>
            <person name="Guerrier D."/>
            <person name="Giraudat J."/>
            <person name="Quigley F."/>
            <person name="Clabault G."/>
            <person name="Li Y.-F."/>
            <person name="Mache R."/>
            <person name="Krivitzky M."/>
            <person name="Gy I.J.-J."/>
            <person name="Kreis M."/>
            <person name="Lecharny A."/>
            <person name="Parmentier Y."/>
            <person name="Marbach J."/>
            <person name="Fleck J."/>
            <person name="Clement B."/>
            <person name="Philipps G."/>
            <person name="Herve C."/>
            <person name="Bardet C."/>
            <person name="Tremousaygue D."/>
            <person name="Lescure B."/>
            <person name="Lacomme C."/>
            <person name="Roby D."/>
            <person name="Jourjon M.-F."/>
            <person name="Chabrier P."/>
            <person name="Charpenteau J.-L."/>
            <person name="Desprez T."/>
            <person name="Amselem J."/>
            <person name="Chiapello H."/>
            <person name="Hoefte H."/>
        </authorList>
    </citation>
    <scope>NUCLEOTIDE SEQUENCE [LARGE SCALE MRNA] OF 38-164</scope>
    <source>
        <strain>cv. Columbia</strain>
    </source>
</reference>
<reference key="7">
    <citation type="journal article" date="2001" name="Plant Physiol.">
        <title>The organization of cytoplasmic ribosomal protein genes in the Arabidopsis genome.</title>
        <authorList>
            <person name="Barakat A."/>
            <person name="Szick-Miranda K."/>
            <person name="Chang I.-F."/>
            <person name="Guyot R."/>
            <person name="Blanc G."/>
            <person name="Cooke R."/>
            <person name="Delseny M."/>
            <person name="Bailey-Serres J."/>
        </authorList>
    </citation>
    <scope>GENE FAMILY ORGANIZATION</scope>
    <scope>NOMENCLATURE</scope>
</reference>
<reference key="8">
    <citation type="journal article" date="2014" name="Plant Signal. Behav.">
        <title>REIL proteins of Arabidopsis thaliana interact in yeast-2-hybrid assays with homologs of the yeast Rlp24, Rpl24A, Rlp24B, Arx1, and Jjj1 proteins.</title>
        <authorList>
            <person name="Schmidt S."/>
            <person name="Dethloff F."/>
            <person name="Beine-Golovchuk O."/>
            <person name="Kopka J."/>
        </authorList>
    </citation>
    <scope>INTERACTION WITH REIL1 AND REIL2</scope>
</reference>
<reference key="9">
    <citation type="journal article" date="2023" name="Plant Cell">
        <title>An updated nomenclature for plant ribosomal protein genes.</title>
        <authorList>
            <person name="Scarpin M.R."/>
            <person name="Busche M."/>
            <person name="Martinez R.E."/>
            <person name="Harper L.C."/>
            <person name="Reiser L."/>
            <person name="Szakonyi D."/>
            <person name="Merchante C."/>
            <person name="Lan T."/>
            <person name="Xiong W."/>
            <person name="Mo B."/>
            <person name="Tang G."/>
            <person name="Chen X."/>
            <person name="Bailey-Serres J."/>
            <person name="Browning K.S."/>
            <person name="Brunkard J.O."/>
        </authorList>
    </citation>
    <scope>NOMENCLATURE</scope>
</reference>
<name>RL241_ARATH</name>
<comment type="function">
    <text evidence="2">Might have an extraribosomal function in reinitiation of translation.</text>
</comment>
<comment type="subunit">
    <text evidence="2 3">Interacts with the cauliflower mosaic virus transactivator TAV to form a TAV/60S complex (PubMed:11572778). Interacts with REIL1 AND REIL2 (PubMed:24603461).</text>
</comment>
<comment type="interaction">
    <interactant intactId="EBI-7217243">
        <id>Q42347</id>
    </interactant>
    <interactant intactId="EBI-7216904">
        <id>F4K210</id>
        <label>MAF19.20</label>
    </interactant>
    <organismsDiffer>false</organismsDiffer>
    <experiments>3</experiments>
</comment>
<comment type="similarity">
    <text evidence="5">Belongs to the eukaryotic ribosomal protein eL24 family.</text>
</comment>
<comment type="sequence caution" evidence="5">
    <conflict type="erroneous initiation">
        <sequence resource="EMBL-CDS" id="CAA23385"/>
    </conflict>
</comment>
<accession>Q42347</accession>
<accession>Q9LF73</accession>
<accession>Q9SKP1</accession>
<evidence type="ECO:0000256" key="1">
    <source>
        <dbReference type="SAM" id="MobiDB-lite"/>
    </source>
</evidence>
<evidence type="ECO:0000269" key="2">
    <source>
    </source>
</evidence>
<evidence type="ECO:0000269" key="3">
    <source>
    </source>
</evidence>
<evidence type="ECO:0000303" key="4">
    <source>
    </source>
</evidence>
<evidence type="ECO:0000305" key="5"/>
<dbReference type="EMBL" id="AJ293729">
    <property type="protein sequence ID" value="CAC01930.1"/>
    <property type="molecule type" value="mRNA"/>
</dbReference>
<dbReference type="EMBL" id="AC006282">
    <property type="protein sequence ID" value="AAD20138.2"/>
    <property type="molecule type" value="Genomic_DNA"/>
</dbReference>
<dbReference type="EMBL" id="AC006919">
    <property type="protein sequence ID" value="AAM15314.1"/>
    <property type="molecule type" value="Genomic_DNA"/>
</dbReference>
<dbReference type="EMBL" id="CP002685">
    <property type="protein sequence ID" value="AEC09274.1"/>
    <property type="molecule type" value="Genomic_DNA"/>
</dbReference>
<dbReference type="EMBL" id="AY058086">
    <property type="protein sequence ID" value="AAL24194.1"/>
    <property type="molecule type" value="mRNA"/>
</dbReference>
<dbReference type="EMBL" id="AY072350">
    <property type="protein sequence ID" value="AAL62342.1"/>
    <property type="molecule type" value="mRNA"/>
</dbReference>
<dbReference type="EMBL" id="AY114728">
    <property type="protein sequence ID" value="AAM48047.1"/>
    <property type="molecule type" value="mRNA"/>
</dbReference>
<dbReference type="EMBL" id="AY085323">
    <property type="protein sequence ID" value="AAM62554.1"/>
    <property type="molecule type" value="mRNA"/>
</dbReference>
<dbReference type="EMBL" id="F20030">
    <property type="protein sequence ID" value="CAA23385.1"/>
    <property type="status" value="ALT_INIT"/>
    <property type="molecule type" value="mRNA"/>
</dbReference>
<dbReference type="PIR" id="F84782">
    <property type="entry name" value="F84782"/>
</dbReference>
<dbReference type="RefSeq" id="NP_565851.1">
    <property type="nucleotide sequence ID" value="NM_129217.5"/>
</dbReference>
<dbReference type="SMR" id="Q42347"/>
<dbReference type="BioGRID" id="3578">
    <property type="interactions" value="39"/>
</dbReference>
<dbReference type="FunCoup" id="Q42347">
    <property type="interactions" value="3592"/>
</dbReference>
<dbReference type="IntAct" id="Q42347">
    <property type="interactions" value="3"/>
</dbReference>
<dbReference type="MINT" id="Q42347"/>
<dbReference type="STRING" id="3702.Q42347"/>
<dbReference type="iPTMnet" id="Q42347"/>
<dbReference type="PaxDb" id="3702-AT2G36620.1"/>
<dbReference type="ProteomicsDB" id="236189"/>
<dbReference type="EnsemblPlants" id="AT2G36620.1">
    <property type="protein sequence ID" value="AT2G36620.1"/>
    <property type="gene ID" value="AT2G36620"/>
</dbReference>
<dbReference type="GeneID" id="818234"/>
<dbReference type="Gramene" id="AT2G36620.1">
    <property type="protein sequence ID" value="AT2G36620.1"/>
    <property type="gene ID" value="AT2G36620"/>
</dbReference>
<dbReference type="KEGG" id="ath:AT2G36620"/>
<dbReference type="Araport" id="AT2G36620"/>
<dbReference type="TAIR" id="AT2G36620">
    <property type="gene designation" value="RPL24A"/>
</dbReference>
<dbReference type="eggNOG" id="KOG1722">
    <property type="taxonomic scope" value="Eukaryota"/>
</dbReference>
<dbReference type="HOGENOM" id="CLU_106411_3_0_1"/>
<dbReference type="InParanoid" id="Q42347"/>
<dbReference type="OMA" id="EYASKQQ"/>
<dbReference type="OrthoDB" id="1727108at2759"/>
<dbReference type="PhylomeDB" id="Q42347"/>
<dbReference type="CD-CODE" id="4299E36E">
    <property type="entry name" value="Nucleolus"/>
</dbReference>
<dbReference type="PRO" id="PR:Q42347"/>
<dbReference type="Proteomes" id="UP000006548">
    <property type="component" value="Chromosome 2"/>
</dbReference>
<dbReference type="ExpressionAtlas" id="Q42347">
    <property type="expression patterns" value="baseline and differential"/>
</dbReference>
<dbReference type="GO" id="GO:0022625">
    <property type="term" value="C:cytosolic large ribosomal subunit"/>
    <property type="evidence" value="ECO:0007005"/>
    <property type="project" value="TAIR"/>
</dbReference>
<dbReference type="GO" id="GO:0005783">
    <property type="term" value="C:endoplasmic reticulum"/>
    <property type="evidence" value="ECO:0007005"/>
    <property type="project" value="TAIR"/>
</dbReference>
<dbReference type="GO" id="GO:0003729">
    <property type="term" value="F:mRNA binding"/>
    <property type="evidence" value="ECO:0000314"/>
    <property type="project" value="TAIR"/>
</dbReference>
<dbReference type="GO" id="GO:0003735">
    <property type="term" value="F:structural constituent of ribosome"/>
    <property type="evidence" value="ECO:0000314"/>
    <property type="project" value="CAFA"/>
</dbReference>
<dbReference type="CDD" id="cd00472">
    <property type="entry name" value="Ribosomal_L24e_L24"/>
    <property type="match status" value="1"/>
</dbReference>
<dbReference type="FunFam" id="2.30.170.20:FF:000003">
    <property type="entry name" value="60S ribosomal protein L24"/>
    <property type="match status" value="1"/>
</dbReference>
<dbReference type="Gene3D" id="6.10.250.1270">
    <property type="match status" value="1"/>
</dbReference>
<dbReference type="Gene3D" id="2.30.170.20">
    <property type="entry name" value="Ribosomal protein L24e"/>
    <property type="match status" value="1"/>
</dbReference>
<dbReference type="InterPro" id="IPR038630">
    <property type="entry name" value="L24e/L24_sf"/>
</dbReference>
<dbReference type="InterPro" id="IPR056366">
    <property type="entry name" value="Ribosomal_eL24"/>
</dbReference>
<dbReference type="InterPro" id="IPR000988">
    <property type="entry name" value="Ribosomal_eL24-rel_N"/>
</dbReference>
<dbReference type="InterPro" id="IPR023442">
    <property type="entry name" value="Ribosomal_eL24_CS"/>
</dbReference>
<dbReference type="InterPro" id="IPR011017">
    <property type="entry name" value="TRASH_dom"/>
</dbReference>
<dbReference type="PANTHER" id="PTHR10792">
    <property type="entry name" value="60S RIBOSOMAL PROTEIN L24"/>
    <property type="match status" value="1"/>
</dbReference>
<dbReference type="PANTHER" id="PTHR10792:SF51">
    <property type="entry name" value="LARGE RIBOSOMAL SUBUNIT PROTEIN EL24Y-RELATED"/>
    <property type="match status" value="1"/>
</dbReference>
<dbReference type="Pfam" id="PF01246">
    <property type="entry name" value="Ribosomal_L24e"/>
    <property type="match status" value="1"/>
</dbReference>
<dbReference type="SMART" id="SM00746">
    <property type="entry name" value="TRASH"/>
    <property type="match status" value="1"/>
</dbReference>
<dbReference type="SUPFAM" id="SSF57716">
    <property type="entry name" value="Glucocorticoid receptor-like (DNA-binding domain)"/>
    <property type="match status" value="1"/>
</dbReference>
<dbReference type="PROSITE" id="PS01073">
    <property type="entry name" value="RIBOSOMAL_L24E"/>
    <property type="match status" value="1"/>
</dbReference>
<protein>
    <recommendedName>
        <fullName evidence="4">Large ribosomal subunit protein eL24z</fullName>
    </recommendedName>
    <alternativeName>
        <fullName>60S ribosomal protein L24-1</fullName>
    </alternativeName>
</protein>
<sequence>MVLKTELCRFSGQKIYPGRGIRFIRSDSQVFLFLNSKCKRYFHNKLKPSKLCWTAMYRKQHKKDAAQEAVKRRRRATKKPYSRSIVGATLEVIQKKRAEKPEVRDAAREAALREIKERIKKTKDEKKAKKVEYASKQQKSQVKGNIPKSAAPKAAKMGGGGGRR</sequence>
<feature type="chain" id="PRO_0000244739" description="Large ribosomal subunit protein eL24z">
    <location>
        <begin position="1"/>
        <end position="164"/>
    </location>
</feature>
<feature type="region of interest" description="Disordered" evidence="1">
    <location>
        <begin position="117"/>
        <end position="164"/>
    </location>
</feature>
<feature type="compositionally biased region" description="Basic and acidic residues" evidence="1">
    <location>
        <begin position="117"/>
        <end position="133"/>
    </location>
</feature>
<feature type="sequence conflict" description="In Ref. 6." evidence="5" ref="6">
    <original>N</original>
    <variation>Y</variation>
    <location>
        <position position="44"/>
    </location>
</feature>
<feature type="sequence conflict" description="In Ref. 6; CAA23385." evidence="5" ref="6">
    <original>A</original>
    <variation>S</variation>
    <location>
        <position position="150"/>
    </location>
</feature>
<organism>
    <name type="scientific">Arabidopsis thaliana</name>
    <name type="common">Mouse-ear cress</name>
    <dbReference type="NCBI Taxonomy" id="3702"/>
    <lineage>
        <taxon>Eukaryota</taxon>
        <taxon>Viridiplantae</taxon>
        <taxon>Streptophyta</taxon>
        <taxon>Embryophyta</taxon>
        <taxon>Tracheophyta</taxon>
        <taxon>Spermatophyta</taxon>
        <taxon>Magnoliopsida</taxon>
        <taxon>eudicotyledons</taxon>
        <taxon>Gunneridae</taxon>
        <taxon>Pentapetalae</taxon>
        <taxon>rosids</taxon>
        <taxon>malvids</taxon>
        <taxon>Brassicales</taxon>
        <taxon>Brassicaceae</taxon>
        <taxon>Camelineae</taxon>
        <taxon>Arabidopsis</taxon>
    </lineage>
</organism>
<gene>
    <name type="primary">RPL24A</name>
    <name type="ordered locus">At2g36620</name>
    <name type="ORF">F13K3.2</name>
    <name type="ORF">F1O11.25</name>
</gene>